<reference key="1">
    <citation type="journal article" date="2009" name="Proc. Natl. Acad. Sci. U.S.A.">
        <title>Eukaryote-to-eukaryote gene transfer events revealed by the genome sequence of the wine yeast Saccharomyces cerevisiae EC1118.</title>
        <authorList>
            <person name="Novo M."/>
            <person name="Bigey F."/>
            <person name="Beyne E."/>
            <person name="Galeote V."/>
            <person name="Gavory F."/>
            <person name="Mallet S."/>
            <person name="Cambon B."/>
            <person name="Legras J.-L."/>
            <person name="Wincker P."/>
            <person name="Casaregola S."/>
            <person name="Dequin S."/>
        </authorList>
    </citation>
    <scope>NUCLEOTIDE SEQUENCE [LARGE SCALE GENOMIC DNA]</scope>
    <source>
        <strain>Lalvin EC1118 / Prise de mousse</strain>
    </source>
</reference>
<keyword id="KW-1017">Isopeptide bond</keyword>
<keyword id="KW-0472">Membrane</keyword>
<keyword id="KW-0597">Phosphoprotein</keyword>
<keyword id="KW-0812">Transmembrane</keyword>
<keyword id="KW-1133">Transmembrane helix</keyword>
<keyword id="KW-0832">Ubl conjugation</keyword>
<organism>
    <name type="scientific">Saccharomyces cerevisiae (strain Lalvin EC1118 / Prise de mousse)</name>
    <name type="common">Baker's yeast</name>
    <dbReference type="NCBI Taxonomy" id="643680"/>
    <lineage>
        <taxon>Eukaryota</taxon>
        <taxon>Fungi</taxon>
        <taxon>Dikarya</taxon>
        <taxon>Ascomycota</taxon>
        <taxon>Saccharomycotina</taxon>
        <taxon>Saccharomycetes</taxon>
        <taxon>Saccharomycetales</taxon>
        <taxon>Saccharomycetaceae</taxon>
        <taxon>Saccharomyces</taxon>
    </lineage>
</organism>
<sequence>MTVITIAKRGLPKLTTSTSSTTTASSSSTITSVASSSSSLPLLSNSTSSSIIPSITPPSRNGNPYILDSGDMPNGTVFIVVGGIAGVIFLAILLWWVITTYSSHRLTRSVQDYESKMFSAQHTQFYGDSPYMDYPAKENFQDQVHISESDISPGNKDESVKDALVSHTNNEKPFLSNFERPLSSLVSESNRNSLFISPTGDILYKTRLSKLYQESPRLLQKPVIMTSDNVSTNSLVSTISSSSASSLDNGNEKEVGEDIRKPAKIASSPSRKLLNSPESDGSVNRNHSKGNLLVVQSKRKPTPSTYLEHMLEGKEQDE</sequence>
<feature type="chain" id="PRO_0000409313" description="Pheromone-regulated membrane protein 5">
    <location>
        <begin position="1"/>
        <end position="318"/>
    </location>
</feature>
<feature type="transmembrane region" description="Helical" evidence="2">
    <location>
        <begin position="78"/>
        <end position="98"/>
    </location>
</feature>
<feature type="region of interest" description="Disordered" evidence="3">
    <location>
        <begin position="238"/>
        <end position="318"/>
    </location>
</feature>
<feature type="compositionally biased region" description="Low complexity" evidence="3">
    <location>
        <begin position="238"/>
        <end position="247"/>
    </location>
</feature>
<feature type="compositionally biased region" description="Basic and acidic residues" evidence="3">
    <location>
        <begin position="250"/>
        <end position="261"/>
    </location>
</feature>
<feature type="compositionally biased region" description="Polar residues" evidence="3">
    <location>
        <begin position="276"/>
        <end position="285"/>
    </location>
</feature>
<feature type="compositionally biased region" description="Basic and acidic residues" evidence="3">
    <location>
        <begin position="309"/>
        <end position="318"/>
    </location>
</feature>
<feature type="modified residue" description="Phosphoserine" evidence="1">
    <location>
        <position position="129"/>
    </location>
</feature>
<feature type="modified residue" description="Phosphoserine" evidence="1">
    <location>
        <position position="279"/>
    </location>
</feature>
<feature type="modified residue" description="Phosphoserine" evidence="1">
    <location>
        <position position="282"/>
    </location>
</feature>
<feature type="modified residue" description="Phosphoserine" evidence="1">
    <location>
        <position position="288"/>
    </location>
</feature>
<feature type="cross-link" description="Glycyl lysine isopeptide (Lys-Gly) (interchain with G-Cter in ubiquitin)" evidence="1">
    <location>
        <position position="314"/>
    </location>
</feature>
<gene>
    <name type="primary">PRM5</name>
    <name type="ORF">EC1118_1I12_0606g</name>
</gene>
<dbReference type="EMBL" id="FN393074">
    <property type="protein sequence ID" value="CAY80390.1"/>
    <property type="molecule type" value="Genomic_DNA"/>
</dbReference>
<dbReference type="HOGENOM" id="CLU_061224_0_0_1"/>
<dbReference type="OrthoDB" id="39523at4893"/>
<dbReference type="Proteomes" id="UP000000286">
    <property type="component" value="Chromosome IX, Scaffold EC1118_1I12"/>
</dbReference>
<dbReference type="GO" id="GO:0005935">
    <property type="term" value="C:cellular bud neck"/>
    <property type="evidence" value="ECO:0007669"/>
    <property type="project" value="TreeGrafter"/>
</dbReference>
<dbReference type="GO" id="GO:0000324">
    <property type="term" value="C:fungal-type vacuole"/>
    <property type="evidence" value="ECO:0007669"/>
    <property type="project" value="TreeGrafter"/>
</dbReference>
<dbReference type="GO" id="GO:0016020">
    <property type="term" value="C:membrane"/>
    <property type="evidence" value="ECO:0007669"/>
    <property type="project" value="UniProtKB-SubCell"/>
</dbReference>
<dbReference type="InterPro" id="IPR051009">
    <property type="entry name" value="PRM"/>
</dbReference>
<dbReference type="PANTHER" id="PTHR36089">
    <property type="entry name" value="CHITIN SYNTHASE 3 COMPLEX PROTEIN CSI2-RELATED"/>
    <property type="match status" value="1"/>
</dbReference>
<dbReference type="PANTHER" id="PTHR36089:SF1">
    <property type="entry name" value="CHITIN SYNTHASE 3 COMPLEX PROTEIN CSI2-RELATED"/>
    <property type="match status" value="1"/>
</dbReference>
<proteinExistence type="inferred from homology"/>
<accession>C8ZAC7</accession>
<comment type="subcellular location">
    <subcellularLocation>
        <location evidence="4">Membrane</location>
        <topology evidence="4">Single-pass membrane protein</topology>
    </subcellularLocation>
</comment>
<comment type="similarity">
    <text evidence="4">Belongs to the PRM5 family.</text>
</comment>
<protein>
    <recommendedName>
        <fullName>Pheromone-regulated membrane protein 5</fullName>
    </recommendedName>
</protein>
<name>PRM5_YEAS8</name>
<evidence type="ECO:0000250" key="1">
    <source>
        <dbReference type="UniProtKB" id="P40476"/>
    </source>
</evidence>
<evidence type="ECO:0000255" key="2"/>
<evidence type="ECO:0000256" key="3">
    <source>
        <dbReference type="SAM" id="MobiDB-lite"/>
    </source>
</evidence>
<evidence type="ECO:0000305" key="4"/>